<organism>
    <name type="scientific">Bacillus licheniformis (strain ATCC 14580 / DSM 13 / JCM 2505 / CCUG 7422 / NBRC 12200 / NCIMB 9375 / NCTC 10341 / NRRL NRS-1264 / Gibson 46)</name>
    <dbReference type="NCBI Taxonomy" id="279010"/>
    <lineage>
        <taxon>Bacteria</taxon>
        <taxon>Bacillati</taxon>
        <taxon>Bacillota</taxon>
        <taxon>Bacilli</taxon>
        <taxon>Bacillales</taxon>
        <taxon>Bacillaceae</taxon>
        <taxon>Bacillus</taxon>
    </lineage>
</organism>
<reference key="1">
    <citation type="journal article" date="2004" name="J. Mol. Microbiol. Biotechnol.">
        <title>The complete genome sequence of Bacillus licheniformis DSM13, an organism with great industrial potential.</title>
        <authorList>
            <person name="Veith B."/>
            <person name="Herzberg C."/>
            <person name="Steckel S."/>
            <person name="Feesche J."/>
            <person name="Maurer K.H."/>
            <person name="Ehrenreich P."/>
            <person name="Baeumer S."/>
            <person name="Henne A."/>
            <person name="Liesegang H."/>
            <person name="Merkl R."/>
            <person name="Ehrenreich A."/>
            <person name="Gottschalk G."/>
        </authorList>
    </citation>
    <scope>NUCLEOTIDE SEQUENCE [LARGE SCALE GENOMIC DNA]</scope>
    <source>
        <strain>ATCC 14580 / DSM 13 / JCM 2505 / CCUG 7422 / NBRC 12200 / NCIMB 9375 / NCTC 10341 / NRRL NRS-1264 / Gibson 46</strain>
    </source>
</reference>
<reference key="2">
    <citation type="journal article" date="2004" name="Genome Biol.">
        <title>Complete genome sequence of the industrial bacterium Bacillus licheniformis and comparisons with closely related Bacillus species.</title>
        <authorList>
            <person name="Rey M.W."/>
            <person name="Ramaiya P."/>
            <person name="Nelson B.A."/>
            <person name="Brody-Karpin S.D."/>
            <person name="Zaretsky E.J."/>
            <person name="Tang M."/>
            <person name="Lopez de Leon A."/>
            <person name="Xiang H."/>
            <person name="Gusti V."/>
            <person name="Clausen I.G."/>
            <person name="Olsen P.B."/>
            <person name="Rasmussen M.D."/>
            <person name="Andersen J.T."/>
            <person name="Joergensen P.L."/>
            <person name="Larsen T.S."/>
            <person name="Sorokin A."/>
            <person name="Bolotin A."/>
            <person name="Lapidus A."/>
            <person name="Galleron N."/>
            <person name="Ehrlich S.D."/>
            <person name="Berka R.M."/>
        </authorList>
    </citation>
    <scope>NUCLEOTIDE SEQUENCE [LARGE SCALE GENOMIC DNA]</scope>
    <source>
        <strain>ATCC 14580 / DSM 13 / JCM 2505 / CCUG 7422 / NBRC 12200 / NCIMB 9375 / NCTC 10341 / NRRL NRS-1264 / Gibson 46</strain>
    </source>
</reference>
<gene>
    <name evidence="1" type="primary">rpoB</name>
    <name type="ordered locus">BLi00125</name>
    <name type="ordered locus">BL02798</name>
</gene>
<sequence length="1193" mass="133692">MTGQLVQYGRHRQRRSYARISEVLELPNLIEIQTSSYQWFLDEGLREMFQDISPIEDFTGNLSLEFIDYSLGEPKYPVEESKERDVTYSAPLRVKVRLINKETGEVKDQDVFMGDFPIMTDTGTFIINGAERVIVSQLVRSPSVYFSGKVDKNGKKGFTATVIPNRGAWLEYETDAKDVVYVRIDRTRKLPVTVLLRALGFGSDQEIIDLIGENEYLRNTLDKDNTENTDKALLEIYERLRPGEPPTVENAKSLLDSRFFDPKRYDLASVGRYKINKKLHIKNRLFNQRLAETLVDPETGEILAEKGAILDRRTLDKVLPYLENGIGFKKLYPNGGVVEDEVTLQSIKIYAPTDQEGEQTINVIGNAYIEEGVKNITPSDIIASISYFFNLLHGVGDTDDIDHLGNRRLRSVGELLQNQFRIGLSRMERVVRERMSIQDTNTITPQQLINIRPVIASIKEFFGSSQLSQFMDQTNPLAELTHKRRLSALGPGGLTRERAGMEVRDVHYSHYGRMCPIETPEGPNIGLINSLSSFAKVNRFGFIETPYRRVDPETGKVTPRIDYLTADEEDNYVVAQANARLNDDGSFVDDSIVARFRGENTVVPKDRVDYMDVSPKQVVSAATACIPFLENDDSNRALMGANMQRQAVPLMQPESPIVGTGMEYVSAKDSGAAVICRHPGIVERVEAKNIWVRRYEEVDGQKVKGNLDKYSLLKFVRSNQGTCYNQRPIVSVGDEVEKGEILADGPSMEKGELALGRNVMVGFMTWDGYNYEDAIIMSERLVKDDVYTSIHIEEYESEARDTKLGPEEITRDIPNVGEDALRNLDERGIIRVGAEVKDGDLLVGKVTPKGVTELTAEERLLHAIFGEKAREVRDTSLRVPHGGGGIILDVKVFNREDGDELPPGVNQLVRVYIVQKRKISEGDKMAGRHGNKGVISKILPEEDMPYLPDGTPIDIMLNPLGVPSRMNIGQVLELHLGMAARRLGLHVASPVFDGAREEDVWETLEEAGMSRDAKTVLYDGRTGEPFDNRVSVGIMYMIKLAHMVDDKLHARSTGPYSLVTQQPLGGKAQFGGQRFGEMEVWALEAYGAAYTLQEILTVKSDDVVGRVKTYEAIVKGDNVPEPGVPESFKVLIKELQSLGMDVKILSSDEEEIEMRDLEDDEDAKQNEGLSLPNDEESEELVSADAERDVVTKE</sequence>
<comment type="function">
    <text evidence="1">DNA-dependent RNA polymerase catalyzes the transcription of DNA into RNA using the four ribonucleoside triphosphates as substrates.</text>
</comment>
<comment type="catalytic activity">
    <reaction evidence="1">
        <text>RNA(n) + a ribonucleoside 5'-triphosphate = RNA(n+1) + diphosphate</text>
        <dbReference type="Rhea" id="RHEA:21248"/>
        <dbReference type="Rhea" id="RHEA-COMP:14527"/>
        <dbReference type="Rhea" id="RHEA-COMP:17342"/>
        <dbReference type="ChEBI" id="CHEBI:33019"/>
        <dbReference type="ChEBI" id="CHEBI:61557"/>
        <dbReference type="ChEBI" id="CHEBI:140395"/>
        <dbReference type="EC" id="2.7.7.6"/>
    </reaction>
</comment>
<comment type="subunit">
    <text evidence="1">The RNAP catalytic core consists of 2 alpha, 1 beta, 1 beta' and 1 omega subunit. When a sigma factor is associated with the core the holoenzyme is formed, which can initiate transcription.</text>
</comment>
<comment type="similarity">
    <text evidence="1">Belongs to the RNA polymerase beta chain family.</text>
</comment>
<keyword id="KW-0240">DNA-directed RNA polymerase</keyword>
<keyword id="KW-0548">Nucleotidyltransferase</keyword>
<keyword id="KW-1185">Reference proteome</keyword>
<keyword id="KW-0804">Transcription</keyword>
<keyword id="KW-0808">Transferase</keyword>
<feature type="chain" id="PRO_0000224028" description="DNA-directed RNA polymerase subunit beta">
    <location>
        <begin position="1"/>
        <end position="1193"/>
    </location>
</feature>
<feature type="region of interest" description="Disordered" evidence="2">
    <location>
        <begin position="1153"/>
        <end position="1193"/>
    </location>
</feature>
<feature type="compositionally biased region" description="Acidic residues" evidence="2">
    <location>
        <begin position="1153"/>
        <end position="1162"/>
    </location>
</feature>
<feature type="compositionally biased region" description="Basic and acidic residues" evidence="2">
    <location>
        <begin position="1184"/>
        <end position="1193"/>
    </location>
</feature>
<name>RPOB_BACLD</name>
<accession>Q65PB5</accession>
<accession>Q62ZQ4</accession>
<proteinExistence type="inferred from homology"/>
<evidence type="ECO:0000255" key="1">
    <source>
        <dbReference type="HAMAP-Rule" id="MF_01321"/>
    </source>
</evidence>
<evidence type="ECO:0000256" key="2">
    <source>
        <dbReference type="SAM" id="MobiDB-lite"/>
    </source>
</evidence>
<dbReference type="EC" id="2.7.7.6" evidence="1"/>
<dbReference type="EMBL" id="AE017333">
    <property type="protein sequence ID" value="AAU39099.1"/>
    <property type="molecule type" value="Genomic_DNA"/>
</dbReference>
<dbReference type="EMBL" id="CP000002">
    <property type="protein sequence ID" value="AAU21754.1"/>
    <property type="molecule type" value="Genomic_DNA"/>
</dbReference>
<dbReference type="RefSeq" id="WP_011197480.1">
    <property type="nucleotide sequence ID" value="NC_006322.1"/>
</dbReference>
<dbReference type="SMR" id="Q65PB5"/>
<dbReference type="STRING" id="279010.BL02798"/>
<dbReference type="GeneID" id="92858911"/>
<dbReference type="KEGG" id="bld:BLi00125"/>
<dbReference type="KEGG" id="bli:BL02798"/>
<dbReference type="PATRIC" id="fig|279010.13.peg.115"/>
<dbReference type="eggNOG" id="COG0085">
    <property type="taxonomic scope" value="Bacteria"/>
</dbReference>
<dbReference type="HOGENOM" id="CLU_000524_4_1_9"/>
<dbReference type="Proteomes" id="UP000000606">
    <property type="component" value="Chromosome"/>
</dbReference>
<dbReference type="GO" id="GO:0000428">
    <property type="term" value="C:DNA-directed RNA polymerase complex"/>
    <property type="evidence" value="ECO:0007669"/>
    <property type="project" value="UniProtKB-KW"/>
</dbReference>
<dbReference type="GO" id="GO:0003677">
    <property type="term" value="F:DNA binding"/>
    <property type="evidence" value="ECO:0007669"/>
    <property type="project" value="UniProtKB-UniRule"/>
</dbReference>
<dbReference type="GO" id="GO:0003899">
    <property type="term" value="F:DNA-directed RNA polymerase activity"/>
    <property type="evidence" value="ECO:0007669"/>
    <property type="project" value="UniProtKB-UniRule"/>
</dbReference>
<dbReference type="GO" id="GO:0032549">
    <property type="term" value="F:ribonucleoside binding"/>
    <property type="evidence" value="ECO:0007669"/>
    <property type="project" value="InterPro"/>
</dbReference>
<dbReference type="GO" id="GO:0006351">
    <property type="term" value="P:DNA-templated transcription"/>
    <property type="evidence" value="ECO:0007669"/>
    <property type="project" value="UniProtKB-UniRule"/>
</dbReference>
<dbReference type="CDD" id="cd00653">
    <property type="entry name" value="RNA_pol_B_RPB2"/>
    <property type="match status" value="1"/>
</dbReference>
<dbReference type="FunFam" id="3.90.1800.10:FF:000001">
    <property type="entry name" value="DNA-directed RNA polymerase subunit beta"/>
    <property type="match status" value="1"/>
</dbReference>
<dbReference type="Gene3D" id="2.40.50.100">
    <property type="match status" value="1"/>
</dbReference>
<dbReference type="Gene3D" id="2.40.50.150">
    <property type="match status" value="1"/>
</dbReference>
<dbReference type="Gene3D" id="3.90.1100.10">
    <property type="match status" value="2"/>
</dbReference>
<dbReference type="Gene3D" id="2.30.150.10">
    <property type="entry name" value="DNA-directed RNA polymerase, beta subunit, external 1 domain"/>
    <property type="match status" value="1"/>
</dbReference>
<dbReference type="Gene3D" id="2.40.270.10">
    <property type="entry name" value="DNA-directed RNA polymerase, subunit 2, domain 6"/>
    <property type="match status" value="2"/>
</dbReference>
<dbReference type="Gene3D" id="3.90.1800.10">
    <property type="entry name" value="RNA polymerase alpha subunit dimerisation domain"/>
    <property type="match status" value="1"/>
</dbReference>
<dbReference type="Gene3D" id="3.90.1110.10">
    <property type="entry name" value="RNA polymerase Rpb2, domain 2"/>
    <property type="match status" value="2"/>
</dbReference>
<dbReference type="HAMAP" id="MF_01321">
    <property type="entry name" value="RNApol_bact_RpoB"/>
    <property type="match status" value="1"/>
</dbReference>
<dbReference type="InterPro" id="IPR042107">
    <property type="entry name" value="DNA-dir_RNA_pol_bsu_ext_1_sf"/>
</dbReference>
<dbReference type="InterPro" id="IPR019462">
    <property type="entry name" value="DNA-dir_RNA_pol_bsu_external_1"/>
</dbReference>
<dbReference type="InterPro" id="IPR015712">
    <property type="entry name" value="DNA-dir_RNA_pol_su2"/>
</dbReference>
<dbReference type="InterPro" id="IPR007120">
    <property type="entry name" value="DNA-dir_RNAP_su2_dom"/>
</dbReference>
<dbReference type="InterPro" id="IPR037033">
    <property type="entry name" value="DNA-dir_RNAP_su2_hyb_sf"/>
</dbReference>
<dbReference type="InterPro" id="IPR010243">
    <property type="entry name" value="RNA_pol_bsu_bac"/>
</dbReference>
<dbReference type="InterPro" id="IPR007121">
    <property type="entry name" value="RNA_pol_bsu_CS"/>
</dbReference>
<dbReference type="InterPro" id="IPR007644">
    <property type="entry name" value="RNA_pol_bsu_protrusion"/>
</dbReference>
<dbReference type="InterPro" id="IPR007642">
    <property type="entry name" value="RNA_pol_Rpb2_2"/>
</dbReference>
<dbReference type="InterPro" id="IPR037034">
    <property type="entry name" value="RNA_pol_Rpb2_2_sf"/>
</dbReference>
<dbReference type="InterPro" id="IPR007645">
    <property type="entry name" value="RNA_pol_Rpb2_3"/>
</dbReference>
<dbReference type="InterPro" id="IPR007641">
    <property type="entry name" value="RNA_pol_Rpb2_7"/>
</dbReference>
<dbReference type="InterPro" id="IPR014724">
    <property type="entry name" value="RNA_pol_RPB2_OB-fold"/>
</dbReference>
<dbReference type="NCBIfam" id="NF001616">
    <property type="entry name" value="PRK00405.1"/>
    <property type="match status" value="1"/>
</dbReference>
<dbReference type="NCBIfam" id="TIGR02013">
    <property type="entry name" value="rpoB"/>
    <property type="match status" value="1"/>
</dbReference>
<dbReference type="PANTHER" id="PTHR20856">
    <property type="entry name" value="DNA-DIRECTED RNA POLYMERASE I SUBUNIT 2"/>
    <property type="match status" value="1"/>
</dbReference>
<dbReference type="Pfam" id="PF04563">
    <property type="entry name" value="RNA_pol_Rpb2_1"/>
    <property type="match status" value="1"/>
</dbReference>
<dbReference type="Pfam" id="PF04561">
    <property type="entry name" value="RNA_pol_Rpb2_2"/>
    <property type="match status" value="2"/>
</dbReference>
<dbReference type="Pfam" id="PF04565">
    <property type="entry name" value="RNA_pol_Rpb2_3"/>
    <property type="match status" value="1"/>
</dbReference>
<dbReference type="Pfam" id="PF10385">
    <property type="entry name" value="RNA_pol_Rpb2_45"/>
    <property type="match status" value="1"/>
</dbReference>
<dbReference type="Pfam" id="PF00562">
    <property type="entry name" value="RNA_pol_Rpb2_6"/>
    <property type="match status" value="1"/>
</dbReference>
<dbReference type="Pfam" id="PF04560">
    <property type="entry name" value="RNA_pol_Rpb2_7"/>
    <property type="match status" value="1"/>
</dbReference>
<dbReference type="SUPFAM" id="SSF64484">
    <property type="entry name" value="beta and beta-prime subunits of DNA dependent RNA-polymerase"/>
    <property type="match status" value="1"/>
</dbReference>
<dbReference type="PROSITE" id="PS01166">
    <property type="entry name" value="RNA_POL_BETA"/>
    <property type="match status" value="1"/>
</dbReference>
<protein>
    <recommendedName>
        <fullName evidence="1">DNA-directed RNA polymerase subunit beta</fullName>
        <shortName evidence="1">RNAP subunit beta</shortName>
        <ecNumber evidence="1">2.7.7.6</ecNumber>
    </recommendedName>
    <alternativeName>
        <fullName evidence="1">RNA polymerase subunit beta</fullName>
    </alternativeName>
    <alternativeName>
        <fullName evidence="1">Transcriptase subunit beta</fullName>
    </alternativeName>
</protein>